<organism>
    <name type="scientific">Clavibacter michiganensis subsp. michiganensis (strain NCPPB 382)</name>
    <dbReference type="NCBI Taxonomy" id="443906"/>
    <lineage>
        <taxon>Bacteria</taxon>
        <taxon>Bacillati</taxon>
        <taxon>Actinomycetota</taxon>
        <taxon>Actinomycetes</taxon>
        <taxon>Micrococcales</taxon>
        <taxon>Microbacteriaceae</taxon>
        <taxon>Clavibacter</taxon>
    </lineage>
</organism>
<comment type="function">
    <text evidence="1">Catalyzes the hydrolysis of glutamine to glutamate and ammonia as part of the biosynthesis of pyridoxal 5'-phosphate. The resulting ammonia molecule is channeled to the active site of PdxS.</text>
</comment>
<comment type="catalytic activity">
    <reaction evidence="1">
        <text>aldehydo-D-ribose 5-phosphate + D-glyceraldehyde 3-phosphate + L-glutamine = pyridoxal 5'-phosphate + L-glutamate + phosphate + 3 H2O + H(+)</text>
        <dbReference type="Rhea" id="RHEA:31507"/>
        <dbReference type="ChEBI" id="CHEBI:15377"/>
        <dbReference type="ChEBI" id="CHEBI:15378"/>
        <dbReference type="ChEBI" id="CHEBI:29985"/>
        <dbReference type="ChEBI" id="CHEBI:43474"/>
        <dbReference type="ChEBI" id="CHEBI:58273"/>
        <dbReference type="ChEBI" id="CHEBI:58359"/>
        <dbReference type="ChEBI" id="CHEBI:59776"/>
        <dbReference type="ChEBI" id="CHEBI:597326"/>
        <dbReference type="EC" id="4.3.3.6"/>
    </reaction>
</comment>
<comment type="catalytic activity">
    <reaction evidence="1">
        <text>L-glutamine + H2O = L-glutamate + NH4(+)</text>
        <dbReference type="Rhea" id="RHEA:15889"/>
        <dbReference type="ChEBI" id="CHEBI:15377"/>
        <dbReference type="ChEBI" id="CHEBI:28938"/>
        <dbReference type="ChEBI" id="CHEBI:29985"/>
        <dbReference type="ChEBI" id="CHEBI:58359"/>
        <dbReference type="EC" id="3.5.1.2"/>
    </reaction>
</comment>
<comment type="pathway">
    <text evidence="1">Cofactor biosynthesis; pyridoxal 5'-phosphate biosynthesis.</text>
</comment>
<comment type="subunit">
    <text evidence="1">In the presence of PdxS, forms a dodecamer of heterodimers. Only shows activity in the heterodimer.</text>
</comment>
<comment type="similarity">
    <text evidence="1">Belongs to the glutaminase PdxT/SNO family.</text>
</comment>
<protein>
    <recommendedName>
        <fullName evidence="1">Pyridoxal 5'-phosphate synthase subunit PdxT</fullName>
        <ecNumber evidence="1">4.3.3.6</ecNumber>
    </recommendedName>
    <alternativeName>
        <fullName evidence="1">Pdx2</fullName>
    </alternativeName>
    <alternativeName>
        <fullName evidence="1">Pyridoxal 5'-phosphate synthase glutaminase subunit</fullName>
        <ecNumber evidence="1">3.5.1.2</ecNumber>
    </alternativeName>
</protein>
<feature type="chain" id="PRO_0000335568" description="Pyridoxal 5'-phosphate synthase subunit PdxT">
    <location>
        <begin position="1"/>
        <end position="209"/>
    </location>
</feature>
<feature type="active site" description="Nucleophile" evidence="1">
    <location>
        <position position="90"/>
    </location>
</feature>
<feature type="active site" description="Charge relay system" evidence="1">
    <location>
        <position position="185"/>
    </location>
</feature>
<feature type="active site" description="Charge relay system" evidence="1">
    <location>
        <position position="187"/>
    </location>
</feature>
<feature type="binding site" evidence="1">
    <location>
        <begin position="58"/>
        <end position="60"/>
    </location>
    <ligand>
        <name>L-glutamine</name>
        <dbReference type="ChEBI" id="CHEBI:58359"/>
    </ligand>
</feature>
<feature type="binding site" evidence="1">
    <location>
        <position position="119"/>
    </location>
    <ligand>
        <name>L-glutamine</name>
        <dbReference type="ChEBI" id="CHEBI:58359"/>
    </ligand>
</feature>
<feature type="binding site" evidence="1">
    <location>
        <begin position="148"/>
        <end position="149"/>
    </location>
    <ligand>
        <name>L-glutamine</name>
        <dbReference type="ChEBI" id="CHEBI:58359"/>
    </ligand>
</feature>
<proteinExistence type="inferred from homology"/>
<name>PDXT_CLAM3</name>
<sequence length="209" mass="21833">MAGSTAEQHGDGPLVGVLALQGDVREHVRVLQGFGARTRLVRQPKDLPGISGLVIPGGESTVMDKLSRQFGIAGPLRSAIDDGLPVYGTCAGLIMLADEIVDAIHDQRSIGGLDVSVRRNAFGSQTASFEVDLDVPALGDPPVHAVFIRAPVVASVGPAASALASLDDGRVVAVRQGALLGTSFHPEVTGDLRFHRLFLDMVEDAGRTL</sequence>
<gene>
    <name evidence="1" type="primary">pdxT</name>
    <name type="ordered locus">CMM_1818</name>
</gene>
<evidence type="ECO:0000255" key="1">
    <source>
        <dbReference type="HAMAP-Rule" id="MF_01615"/>
    </source>
</evidence>
<accession>A5CS10</accession>
<dbReference type="EC" id="4.3.3.6" evidence="1"/>
<dbReference type="EC" id="3.5.1.2" evidence="1"/>
<dbReference type="EMBL" id="AM711867">
    <property type="protein sequence ID" value="CAN01873.1"/>
    <property type="molecule type" value="Genomic_DNA"/>
</dbReference>
<dbReference type="RefSeq" id="WP_012038505.1">
    <property type="nucleotide sequence ID" value="NC_009480.1"/>
</dbReference>
<dbReference type="SMR" id="A5CS10"/>
<dbReference type="MEROPS" id="C26.A32"/>
<dbReference type="KEGG" id="cmi:CMM_1818"/>
<dbReference type="eggNOG" id="COG0311">
    <property type="taxonomic scope" value="Bacteria"/>
</dbReference>
<dbReference type="HOGENOM" id="CLU_069674_2_0_11"/>
<dbReference type="OrthoDB" id="9810320at2"/>
<dbReference type="UniPathway" id="UPA00245"/>
<dbReference type="Proteomes" id="UP000001564">
    <property type="component" value="Chromosome"/>
</dbReference>
<dbReference type="GO" id="GO:0005829">
    <property type="term" value="C:cytosol"/>
    <property type="evidence" value="ECO:0007669"/>
    <property type="project" value="TreeGrafter"/>
</dbReference>
<dbReference type="GO" id="GO:1903600">
    <property type="term" value="C:glutaminase complex"/>
    <property type="evidence" value="ECO:0007669"/>
    <property type="project" value="TreeGrafter"/>
</dbReference>
<dbReference type="GO" id="GO:0004359">
    <property type="term" value="F:glutaminase activity"/>
    <property type="evidence" value="ECO:0007669"/>
    <property type="project" value="UniProtKB-UniRule"/>
</dbReference>
<dbReference type="GO" id="GO:0036381">
    <property type="term" value="F:pyridoxal 5'-phosphate synthase (glutamine hydrolysing) activity"/>
    <property type="evidence" value="ECO:0007669"/>
    <property type="project" value="UniProtKB-UniRule"/>
</dbReference>
<dbReference type="GO" id="GO:0006543">
    <property type="term" value="P:glutamine catabolic process"/>
    <property type="evidence" value="ECO:0007669"/>
    <property type="project" value="UniProtKB-UniRule"/>
</dbReference>
<dbReference type="GO" id="GO:0042823">
    <property type="term" value="P:pyridoxal phosphate biosynthetic process"/>
    <property type="evidence" value="ECO:0007669"/>
    <property type="project" value="UniProtKB-UniRule"/>
</dbReference>
<dbReference type="GO" id="GO:0008614">
    <property type="term" value="P:pyridoxine metabolic process"/>
    <property type="evidence" value="ECO:0007669"/>
    <property type="project" value="TreeGrafter"/>
</dbReference>
<dbReference type="CDD" id="cd01749">
    <property type="entry name" value="GATase1_PB"/>
    <property type="match status" value="1"/>
</dbReference>
<dbReference type="FunFam" id="3.40.50.880:FF:000010">
    <property type="entry name" value="uncharacterized protein LOC100176842 isoform X2"/>
    <property type="match status" value="1"/>
</dbReference>
<dbReference type="Gene3D" id="3.40.50.880">
    <property type="match status" value="1"/>
</dbReference>
<dbReference type="HAMAP" id="MF_01615">
    <property type="entry name" value="PdxT"/>
    <property type="match status" value="1"/>
</dbReference>
<dbReference type="InterPro" id="IPR029062">
    <property type="entry name" value="Class_I_gatase-like"/>
</dbReference>
<dbReference type="InterPro" id="IPR002161">
    <property type="entry name" value="PdxT/SNO"/>
</dbReference>
<dbReference type="InterPro" id="IPR021196">
    <property type="entry name" value="PdxT/SNO_CS"/>
</dbReference>
<dbReference type="NCBIfam" id="TIGR03800">
    <property type="entry name" value="PLP_synth_Pdx2"/>
    <property type="match status" value="1"/>
</dbReference>
<dbReference type="PANTHER" id="PTHR31559">
    <property type="entry name" value="PYRIDOXAL 5'-PHOSPHATE SYNTHASE SUBUNIT SNO"/>
    <property type="match status" value="1"/>
</dbReference>
<dbReference type="PANTHER" id="PTHR31559:SF0">
    <property type="entry name" value="PYRIDOXAL 5'-PHOSPHATE SYNTHASE SUBUNIT SNO1-RELATED"/>
    <property type="match status" value="1"/>
</dbReference>
<dbReference type="Pfam" id="PF01174">
    <property type="entry name" value="SNO"/>
    <property type="match status" value="1"/>
</dbReference>
<dbReference type="PIRSF" id="PIRSF005639">
    <property type="entry name" value="Glut_amidoT_SNO"/>
    <property type="match status" value="1"/>
</dbReference>
<dbReference type="SUPFAM" id="SSF52317">
    <property type="entry name" value="Class I glutamine amidotransferase-like"/>
    <property type="match status" value="1"/>
</dbReference>
<dbReference type="PROSITE" id="PS01236">
    <property type="entry name" value="PDXT_SNO_1"/>
    <property type="match status" value="1"/>
</dbReference>
<dbReference type="PROSITE" id="PS51130">
    <property type="entry name" value="PDXT_SNO_2"/>
    <property type="match status" value="1"/>
</dbReference>
<reference key="1">
    <citation type="journal article" date="2008" name="J. Bacteriol.">
        <title>The genome sequence of the tomato-pathogenic actinomycete Clavibacter michiganensis subsp. michiganensis NCPPB382 reveals a large island involved in pathogenicity.</title>
        <authorList>
            <person name="Gartemann K.-H."/>
            <person name="Abt B."/>
            <person name="Bekel T."/>
            <person name="Burger A."/>
            <person name="Engemann J."/>
            <person name="Fluegel M."/>
            <person name="Gaigalat L."/>
            <person name="Goesmann A."/>
            <person name="Graefen I."/>
            <person name="Kalinowski J."/>
            <person name="Kaup O."/>
            <person name="Kirchner O."/>
            <person name="Krause L."/>
            <person name="Linke B."/>
            <person name="McHardy A."/>
            <person name="Meyer F."/>
            <person name="Pohle S."/>
            <person name="Rueckert C."/>
            <person name="Schneiker S."/>
            <person name="Zellermann E.-M."/>
            <person name="Puehler A."/>
            <person name="Eichenlaub R."/>
            <person name="Kaiser O."/>
            <person name="Bartels D."/>
        </authorList>
    </citation>
    <scope>NUCLEOTIDE SEQUENCE [LARGE SCALE GENOMIC DNA]</scope>
    <source>
        <strain>NCPPB 382</strain>
    </source>
</reference>
<keyword id="KW-0315">Glutamine amidotransferase</keyword>
<keyword id="KW-0378">Hydrolase</keyword>
<keyword id="KW-0456">Lyase</keyword>
<keyword id="KW-0663">Pyridoxal phosphate</keyword>